<proteinExistence type="evidence at protein level"/>
<feature type="chain" id="PRO_0000375091" description="B3 domain-containing transcription factor NGA1">
    <location>
        <begin position="1"/>
        <end position="310"/>
    </location>
</feature>
<feature type="DNA-binding region" description="TF-B3" evidence="1">
    <location>
        <begin position="35"/>
        <end position="141"/>
    </location>
</feature>
<feature type="region of interest" description="Disordered" evidence="2">
    <location>
        <begin position="1"/>
        <end position="26"/>
    </location>
</feature>
<feature type="region of interest" description="Disordered" evidence="2">
    <location>
        <begin position="251"/>
        <end position="310"/>
    </location>
</feature>
<feature type="compositionally biased region" description="Basic and acidic residues" evidence="2">
    <location>
        <begin position="16"/>
        <end position="26"/>
    </location>
</feature>
<feature type="compositionally biased region" description="Low complexity" evidence="2">
    <location>
        <begin position="251"/>
        <end position="268"/>
    </location>
</feature>
<feature type="strand" evidence="7">
    <location>
        <begin position="31"/>
        <end position="38"/>
    </location>
</feature>
<feature type="helix" evidence="7">
    <location>
        <begin position="41"/>
        <end position="44"/>
    </location>
</feature>
<feature type="strand" evidence="7">
    <location>
        <begin position="50"/>
        <end position="52"/>
    </location>
</feature>
<feature type="helix" evidence="7">
    <location>
        <begin position="54"/>
        <end position="60"/>
    </location>
</feature>
<feature type="strand" evidence="7">
    <location>
        <begin position="72"/>
        <end position="77"/>
    </location>
</feature>
<feature type="strand" evidence="7">
    <location>
        <begin position="83"/>
        <end position="91"/>
    </location>
</feature>
<feature type="turn" evidence="7">
    <location>
        <begin position="92"/>
        <end position="95"/>
    </location>
</feature>
<feature type="strand" evidence="7">
    <location>
        <begin position="96"/>
        <end position="101"/>
    </location>
</feature>
<feature type="helix" evidence="7">
    <location>
        <begin position="102"/>
        <end position="110"/>
    </location>
</feature>
<feature type="strand" evidence="7">
    <location>
        <begin position="117"/>
        <end position="123"/>
    </location>
</feature>
<feature type="strand" evidence="7">
    <location>
        <begin position="133"/>
        <end position="138"/>
    </location>
</feature>
<accession>O82799</accession>
<reference key="1">
    <citation type="journal article" date="1999" name="Nature">
        <title>Sequence and analysis of chromosome 2 of the plant Arabidopsis thaliana.</title>
        <authorList>
            <person name="Lin X."/>
            <person name="Kaul S."/>
            <person name="Rounsley S.D."/>
            <person name="Shea T.P."/>
            <person name="Benito M.-I."/>
            <person name="Town C.D."/>
            <person name="Fujii C.Y."/>
            <person name="Mason T.M."/>
            <person name="Bowman C.L."/>
            <person name="Barnstead M.E."/>
            <person name="Feldblyum T.V."/>
            <person name="Buell C.R."/>
            <person name="Ketchum K.A."/>
            <person name="Lee J.J."/>
            <person name="Ronning C.M."/>
            <person name="Koo H.L."/>
            <person name="Moffat K.S."/>
            <person name="Cronin L.A."/>
            <person name="Shen M."/>
            <person name="Pai G."/>
            <person name="Van Aken S."/>
            <person name="Umayam L."/>
            <person name="Tallon L.J."/>
            <person name="Gill J.E."/>
            <person name="Adams M.D."/>
            <person name="Carrera A.J."/>
            <person name="Creasy T.H."/>
            <person name="Goodman H.M."/>
            <person name="Somerville C.R."/>
            <person name="Copenhaver G.P."/>
            <person name="Preuss D."/>
            <person name="Nierman W.C."/>
            <person name="White O."/>
            <person name="Eisen J.A."/>
            <person name="Salzberg S.L."/>
            <person name="Fraser C.M."/>
            <person name="Venter J.C."/>
        </authorList>
    </citation>
    <scope>NUCLEOTIDE SEQUENCE [LARGE SCALE GENOMIC DNA]</scope>
    <source>
        <strain>cv. Columbia</strain>
    </source>
</reference>
<reference key="2">
    <citation type="journal article" date="2017" name="Plant J.">
        <title>Araport11: a complete reannotation of the Arabidopsis thaliana reference genome.</title>
        <authorList>
            <person name="Cheng C.Y."/>
            <person name="Krishnakumar V."/>
            <person name="Chan A.P."/>
            <person name="Thibaud-Nissen F."/>
            <person name="Schobel S."/>
            <person name="Town C.D."/>
        </authorList>
    </citation>
    <scope>GENOME REANNOTATION</scope>
    <source>
        <strain>cv. Columbia</strain>
    </source>
</reference>
<reference key="3">
    <citation type="journal article" date="2002" name="Science">
        <title>Functional annotation of a full-length Arabidopsis cDNA collection.</title>
        <authorList>
            <person name="Seki M."/>
            <person name="Narusaka M."/>
            <person name="Kamiya A."/>
            <person name="Ishida J."/>
            <person name="Satou M."/>
            <person name="Sakurai T."/>
            <person name="Nakajima M."/>
            <person name="Enju A."/>
            <person name="Akiyama K."/>
            <person name="Oono Y."/>
            <person name="Muramatsu M."/>
            <person name="Hayashizaki Y."/>
            <person name="Kawai J."/>
            <person name="Carninci P."/>
            <person name="Itoh M."/>
            <person name="Ishii Y."/>
            <person name="Arakawa T."/>
            <person name="Shibata K."/>
            <person name="Shinagawa A."/>
            <person name="Shinozaki K."/>
        </authorList>
    </citation>
    <scope>NUCLEOTIDE SEQUENCE [LARGE SCALE MRNA]</scope>
    <source>
        <strain>cv. Columbia</strain>
    </source>
</reference>
<reference key="4">
    <citation type="journal article" date="2003" name="Science">
        <title>Empirical analysis of transcriptional activity in the Arabidopsis genome.</title>
        <authorList>
            <person name="Yamada K."/>
            <person name="Lim J."/>
            <person name="Dale J.M."/>
            <person name="Chen H."/>
            <person name="Shinn P."/>
            <person name="Palm C.J."/>
            <person name="Southwick A.M."/>
            <person name="Wu H.C."/>
            <person name="Kim C.J."/>
            <person name="Nguyen M."/>
            <person name="Pham P.K."/>
            <person name="Cheuk R.F."/>
            <person name="Karlin-Newmann G."/>
            <person name="Liu S.X."/>
            <person name="Lam B."/>
            <person name="Sakano H."/>
            <person name="Wu T."/>
            <person name="Yu G."/>
            <person name="Miranda M."/>
            <person name="Quach H.L."/>
            <person name="Tripp M."/>
            <person name="Chang C.H."/>
            <person name="Lee J.M."/>
            <person name="Toriumi M.J."/>
            <person name="Chan M.M."/>
            <person name="Tang C.C."/>
            <person name="Onodera C.S."/>
            <person name="Deng J.M."/>
            <person name="Akiyama K."/>
            <person name="Ansari Y."/>
            <person name="Arakawa T."/>
            <person name="Banh J."/>
            <person name="Banno F."/>
            <person name="Bowser L."/>
            <person name="Brooks S.Y."/>
            <person name="Carninci P."/>
            <person name="Chao Q."/>
            <person name="Choy N."/>
            <person name="Enju A."/>
            <person name="Goldsmith A.D."/>
            <person name="Gurjal M."/>
            <person name="Hansen N.F."/>
            <person name="Hayashizaki Y."/>
            <person name="Johnson-Hopson C."/>
            <person name="Hsuan V.W."/>
            <person name="Iida K."/>
            <person name="Karnes M."/>
            <person name="Khan S."/>
            <person name="Koesema E."/>
            <person name="Ishida J."/>
            <person name="Jiang P.X."/>
            <person name="Jones T."/>
            <person name="Kawai J."/>
            <person name="Kamiya A."/>
            <person name="Meyers C."/>
            <person name="Nakajima M."/>
            <person name="Narusaka M."/>
            <person name="Seki M."/>
            <person name="Sakurai T."/>
            <person name="Satou M."/>
            <person name="Tamse R."/>
            <person name="Vaysberg M."/>
            <person name="Wallender E.K."/>
            <person name="Wong C."/>
            <person name="Yamamura Y."/>
            <person name="Yuan S."/>
            <person name="Shinozaki K."/>
            <person name="Davis R.W."/>
            <person name="Theologis A."/>
            <person name="Ecker J.R."/>
        </authorList>
    </citation>
    <scope>NUCLEOTIDE SEQUENCE [LARGE SCALE MRNA]</scope>
    <source>
        <strain>cv. Columbia</strain>
    </source>
</reference>
<reference key="5">
    <citation type="journal article" date="2006" name="Plant Cell">
        <title>Endogenous and synthetic microRNAs stimulate simultaneous, efficient, and localized regulation of multiple targets in diverse species.</title>
        <authorList>
            <person name="Alvarez J.P."/>
            <person name="Pekker I."/>
            <person name="Goldshmidt A."/>
            <person name="Blum E."/>
            <person name="Amsellem Z."/>
            <person name="Eshed Y."/>
        </authorList>
    </citation>
    <scope>FUNCTION</scope>
</reference>
<reference key="6">
    <citation type="journal article" date="2008" name="Trends Plant Sci.">
        <title>The plant B3 superfamily.</title>
        <authorList>
            <person name="Swaminathan K."/>
            <person name="Peterson K."/>
            <person name="Jack T."/>
        </authorList>
    </citation>
    <scope>GENE FAMILY</scope>
</reference>
<reference key="7">
    <citation type="journal article" date="2009" name="Development">
        <title>Dynamic, auxin-responsive plasma membrane-to-nucleus movement of Arabidopsis BRX.</title>
        <authorList>
            <person name="Scacchi E."/>
            <person name="Osmont K.S."/>
            <person name="Beuchat J."/>
            <person name="Salinas P."/>
            <person name="Navarrete-Gomez M."/>
            <person name="Trigueros M."/>
            <person name="Ferrandiz C."/>
            <person name="Hardtke C.S."/>
        </authorList>
    </citation>
    <scope>INTERACTION WITH BRX</scope>
</reference>
<reference key="8">
    <citation type="journal article" date="2016" name="Plant J.">
        <title>Altered expression of the bZIP transcription factor DRINK ME affects growth and reproductive development in Arabidopsis thaliana.</title>
        <authorList>
            <person name="Lozano-Sotomayor P."/>
            <person name="Chavez Montes R.A."/>
            <person name="Silvestre-Vano M."/>
            <person name="Herrera-Ubaldo H."/>
            <person name="Greco R."/>
            <person name="Pablo-Villa J."/>
            <person name="Galliani B.M."/>
            <person name="Diaz-Ramirez D."/>
            <person name="Weemen M."/>
            <person name="Boutilier K."/>
            <person name="Pereira A."/>
            <person name="Colombo L."/>
            <person name="Madueno F."/>
            <person name="Marsch-Martinez N."/>
            <person name="de Folter S."/>
        </authorList>
    </citation>
    <scope>INTERACTION WITH BZIP30</scope>
</reference>
<evidence type="ECO:0000255" key="1">
    <source>
        <dbReference type="PROSITE-ProRule" id="PRU00326"/>
    </source>
</evidence>
<evidence type="ECO:0000256" key="2">
    <source>
        <dbReference type="SAM" id="MobiDB-lite"/>
    </source>
</evidence>
<evidence type="ECO:0000269" key="3">
    <source>
    </source>
</evidence>
<evidence type="ECO:0000269" key="4">
    <source>
    </source>
</evidence>
<evidence type="ECO:0000269" key="5">
    <source>
    </source>
</evidence>
<evidence type="ECO:0000305" key="6"/>
<evidence type="ECO:0007829" key="7">
    <source>
        <dbReference type="PDB" id="5OS9"/>
    </source>
</evidence>
<sequence length="310" mass="34890">MMTDLSLTRDEDEEEAKPLAEEEGAREVADREHMFDKVVTPSDVGKLNRLVIPKQHAERFFPLDSSSNEKGLLLNFEDLTGKSWRFRYSYWNSSQSYVMTKGWSRFVKDKKLDAGDIVSFQRCVGDSGRDSRLFIDWRRRPKVPDHPHFAAGAMFPRFYSFPSTNYSLYNHQQQRHHHSGGGYNYHQIPREFGYGYFVRSVDQRNNPAAAVADPLVIESVPVMMHGRANQELVGTAGKRLRLFGVDMECGESGMTNSTEEESSSSGGSLPRGGGGGASSSSFFQLRLGSSSEDDHFTKKGKSSLSFDLDQ</sequence>
<protein>
    <recommendedName>
        <fullName>B3 domain-containing transcription factor NGA1</fullName>
    </recommendedName>
    <alternativeName>
        <fullName>Protein NGATHA 1</fullName>
    </alternativeName>
</protein>
<organism>
    <name type="scientific">Arabidopsis thaliana</name>
    <name type="common">Mouse-ear cress</name>
    <dbReference type="NCBI Taxonomy" id="3702"/>
    <lineage>
        <taxon>Eukaryota</taxon>
        <taxon>Viridiplantae</taxon>
        <taxon>Streptophyta</taxon>
        <taxon>Embryophyta</taxon>
        <taxon>Tracheophyta</taxon>
        <taxon>Spermatophyta</taxon>
        <taxon>Magnoliopsida</taxon>
        <taxon>eudicotyledons</taxon>
        <taxon>Gunneridae</taxon>
        <taxon>Pentapetalae</taxon>
        <taxon>rosids</taxon>
        <taxon>malvids</taxon>
        <taxon>Brassicales</taxon>
        <taxon>Brassicaceae</taxon>
        <taxon>Camelineae</taxon>
        <taxon>Arabidopsis</taxon>
    </lineage>
</organism>
<gene>
    <name type="primary">NGA1</name>
    <name type="ordered locus">At2g46870</name>
    <name type="ORF">F19D11.25</name>
</gene>
<dbReference type="EMBL" id="AC004411">
    <property type="protein sequence ID" value="AAC34233.1"/>
    <property type="molecule type" value="Genomic_DNA"/>
</dbReference>
<dbReference type="EMBL" id="AC005310">
    <property type="protein sequence ID" value="AAM15018.1"/>
    <property type="molecule type" value="Genomic_DNA"/>
</dbReference>
<dbReference type="EMBL" id="CP002685">
    <property type="protein sequence ID" value="AEC10765.1"/>
    <property type="molecule type" value="Genomic_DNA"/>
</dbReference>
<dbReference type="EMBL" id="AK118045">
    <property type="protein sequence ID" value="BAC42676.1"/>
    <property type="molecule type" value="mRNA"/>
</dbReference>
<dbReference type="EMBL" id="BT008534">
    <property type="protein sequence ID" value="AAP40361.1"/>
    <property type="molecule type" value="mRNA"/>
</dbReference>
<dbReference type="PIR" id="T02200">
    <property type="entry name" value="T02200"/>
</dbReference>
<dbReference type="RefSeq" id="NP_566089.1">
    <property type="nucleotide sequence ID" value="NM_130254.4"/>
</dbReference>
<dbReference type="PDB" id="5OS9">
    <property type="method" value="X-ray"/>
    <property type="resolution" value="1.80 A"/>
    <property type="chains" value="A/B=28-143"/>
</dbReference>
<dbReference type="PDBsum" id="5OS9"/>
<dbReference type="SMR" id="O82799"/>
<dbReference type="BioGRID" id="4635">
    <property type="interactions" value="6"/>
</dbReference>
<dbReference type="FunCoup" id="O82799">
    <property type="interactions" value="143"/>
</dbReference>
<dbReference type="IntAct" id="O82799">
    <property type="interactions" value="8"/>
</dbReference>
<dbReference type="STRING" id="3702.O82799"/>
<dbReference type="GlyGen" id="O82799">
    <property type="glycosylation" value="1 site, 1 O-linked glycan (1 site)"/>
</dbReference>
<dbReference type="PaxDb" id="3702-AT2G46870.1"/>
<dbReference type="ProteomicsDB" id="251133"/>
<dbReference type="EnsemblPlants" id="AT2G46870.1">
    <property type="protein sequence ID" value="AT2G46870.1"/>
    <property type="gene ID" value="AT2G46870"/>
</dbReference>
<dbReference type="GeneID" id="819300"/>
<dbReference type="Gramene" id="AT2G46870.1">
    <property type="protein sequence ID" value="AT2G46870.1"/>
    <property type="gene ID" value="AT2G46870"/>
</dbReference>
<dbReference type="KEGG" id="ath:AT2G46870"/>
<dbReference type="Araport" id="AT2G46870"/>
<dbReference type="TAIR" id="AT2G46870">
    <property type="gene designation" value="NGA1"/>
</dbReference>
<dbReference type="eggNOG" id="ENOG502QSHQ">
    <property type="taxonomic scope" value="Eukaryota"/>
</dbReference>
<dbReference type="HOGENOM" id="CLU_038898_3_2_1"/>
<dbReference type="InParanoid" id="O82799"/>
<dbReference type="OMA" id="MECPNTT"/>
<dbReference type="OrthoDB" id="2020802at2759"/>
<dbReference type="PhylomeDB" id="O82799"/>
<dbReference type="PRO" id="PR:O82799"/>
<dbReference type="Proteomes" id="UP000006548">
    <property type="component" value="Chromosome 2"/>
</dbReference>
<dbReference type="ExpressionAtlas" id="O82799">
    <property type="expression patterns" value="baseline and differential"/>
</dbReference>
<dbReference type="GO" id="GO:0005634">
    <property type="term" value="C:nucleus"/>
    <property type="evidence" value="ECO:0007669"/>
    <property type="project" value="UniProtKB-SubCell"/>
</dbReference>
<dbReference type="GO" id="GO:0003700">
    <property type="term" value="F:DNA-binding transcription factor activity"/>
    <property type="evidence" value="ECO:0000250"/>
    <property type="project" value="TAIR"/>
</dbReference>
<dbReference type="GO" id="GO:0043565">
    <property type="term" value="F:sequence-specific DNA binding"/>
    <property type="evidence" value="ECO:0000314"/>
    <property type="project" value="TAIR"/>
</dbReference>
<dbReference type="GO" id="GO:0009908">
    <property type="term" value="P:flower development"/>
    <property type="evidence" value="ECO:0000315"/>
    <property type="project" value="TAIR"/>
</dbReference>
<dbReference type="GO" id="GO:0048366">
    <property type="term" value="P:leaf development"/>
    <property type="evidence" value="ECO:0000315"/>
    <property type="project" value="TAIR"/>
</dbReference>
<dbReference type="GO" id="GO:1901371">
    <property type="term" value="P:regulation of leaf morphogenesis"/>
    <property type="evidence" value="ECO:0000316"/>
    <property type="project" value="TAIR"/>
</dbReference>
<dbReference type="CDD" id="cd10017">
    <property type="entry name" value="B3_DNA"/>
    <property type="match status" value="1"/>
</dbReference>
<dbReference type="FunFam" id="2.40.330.10:FF:000002">
    <property type="entry name" value="B3 domain-containing protein"/>
    <property type="match status" value="1"/>
</dbReference>
<dbReference type="Gene3D" id="2.40.330.10">
    <property type="entry name" value="DNA-binding pseudobarrel domain"/>
    <property type="match status" value="1"/>
</dbReference>
<dbReference type="InterPro" id="IPR003340">
    <property type="entry name" value="B3_DNA-bd"/>
</dbReference>
<dbReference type="InterPro" id="IPR015300">
    <property type="entry name" value="DNA-bd_pseudobarrel_sf"/>
</dbReference>
<dbReference type="InterPro" id="IPR044800">
    <property type="entry name" value="LEC2-like"/>
</dbReference>
<dbReference type="PANTHER" id="PTHR31140">
    <property type="entry name" value="B3 DOMAIN-CONTAINING TRANSCRIPTION FACTOR ABI3"/>
    <property type="match status" value="1"/>
</dbReference>
<dbReference type="PANTHER" id="PTHR31140:SF123">
    <property type="entry name" value="B3 DOMAIN-CONTAINING TRANSCRIPTION FACTOR NGA1"/>
    <property type="match status" value="1"/>
</dbReference>
<dbReference type="Pfam" id="PF02362">
    <property type="entry name" value="B3"/>
    <property type="match status" value="1"/>
</dbReference>
<dbReference type="SMART" id="SM01019">
    <property type="entry name" value="B3"/>
    <property type="match status" value="1"/>
</dbReference>
<dbReference type="SUPFAM" id="SSF101936">
    <property type="entry name" value="DNA-binding pseudobarrel domain"/>
    <property type="match status" value="1"/>
</dbReference>
<dbReference type="PROSITE" id="PS50863">
    <property type="entry name" value="B3"/>
    <property type="match status" value="1"/>
</dbReference>
<comment type="function">
    <text evidence="3">Regulates lateral organ growth. Functionally redundant with NGA2, NGA3 and NGA4.</text>
</comment>
<comment type="subunit">
    <text evidence="4 5">Interacts with BRX. Interacts with BZIP30 (PubMed:27402171).</text>
</comment>
<comment type="interaction">
    <interactant intactId="EBI-4427936">
        <id>O82799</id>
    </interactant>
    <interactant intactId="EBI-4426649">
        <id>Q17TI5</id>
        <label>BRX</label>
    </interactant>
    <organismsDiffer>false</organismsDiffer>
    <experiments>6</experiments>
</comment>
<comment type="subcellular location">
    <subcellularLocation>
        <location evidence="6">Nucleus</location>
    </subcellularLocation>
</comment>
<name>NGA1_ARATH</name>
<keyword id="KW-0002">3D-structure</keyword>
<keyword id="KW-0238">DNA-binding</keyword>
<keyword id="KW-0539">Nucleus</keyword>
<keyword id="KW-1185">Reference proteome</keyword>
<keyword id="KW-0804">Transcription</keyword>
<keyword id="KW-0805">Transcription regulation</keyword>